<sequence>MRKIILASGSPRRKELLELAGVPFEIIVSEVEETIGAYSSPSDIVMSLALQKASAVAENNSDHIVLGADTIVTYESRILGKPSNKAEAKEMLQLLSGKTHEVYTGVAIIAKDKTVTFYERTEVTFWELTEEEIDAYVASKEPLDKAGSYGIQGKGSIFVQHIQGDYYSVVGLPISRLVRELKQFNIDVTHA</sequence>
<keyword id="KW-0963">Cytoplasm</keyword>
<keyword id="KW-0378">Hydrolase</keyword>
<keyword id="KW-0546">Nucleotide metabolism</keyword>
<keyword id="KW-1185">Reference proteome</keyword>
<gene>
    <name type="primary">maf</name>
    <name type="ordered locus">BA_4686</name>
    <name type="ordered locus">GBAA_4686</name>
    <name type="ordered locus">BAS4352</name>
</gene>
<accession>Q81LD6</accession>
<accession>Q6HST9</accession>
<accession>Q6KM32</accession>
<comment type="function">
    <text evidence="1">Nucleoside triphosphate pyrophosphatase that hydrolyzes dTTP and UTP. May have a dual role in cell division arrest and in preventing the incorporation of modified nucleotides into cellular nucleic acids.</text>
</comment>
<comment type="catalytic activity">
    <reaction evidence="1">
        <text>dTTP + H2O = dTMP + diphosphate + H(+)</text>
        <dbReference type="Rhea" id="RHEA:28534"/>
        <dbReference type="ChEBI" id="CHEBI:15377"/>
        <dbReference type="ChEBI" id="CHEBI:15378"/>
        <dbReference type="ChEBI" id="CHEBI:33019"/>
        <dbReference type="ChEBI" id="CHEBI:37568"/>
        <dbReference type="ChEBI" id="CHEBI:63528"/>
        <dbReference type="EC" id="3.6.1.9"/>
    </reaction>
</comment>
<comment type="catalytic activity">
    <reaction evidence="1">
        <text>UTP + H2O = UMP + diphosphate + H(+)</text>
        <dbReference type="Rhea" id="RHEA:29395"/>
        <dbReference type="ChEBI" id="CHEBI:15377"/>
        <dbReference type="ChEBI" id="CHEBI:15378"/>
        <dbReference type="ChEBI" id="CHEBI:33019"/>
        <dbReference type="ChEBI" id="CHEBI:46398"/>
        <dbReference type="ChEBI" id="CHEBI:57865"/>
        <dbReference type="EC" id="3.6.1.9"/>
    </reaction>
</comment>
<comment type="cofactor">
    <cofactor evidence="1">
        <name>a divalent metal cation</name>
        <dbReference type="ChEBI" id="CHEBI:60240"/>
    </cofactor>
</comment>
<comment type="subcellular location">
    <subcellularLocation>
        <location evidence="1">Cytoplasm</location>
    </subcellularLocation>
</comment>
<comment type="similarity">
    <text evidence="1">Belongs to the Maf family. YhdE subfamily.</text>
</comment>
<evidence type="ECO:0000255" key="1">
    <source>
        <dbReference type="HAMAP-Rule" id="MF_00528"/>
    </source>
</evidence>
<reference key="1">
    <citation type="journal article" date="2003" name="Nature">
        <title>The genome sequence of Bacillus anthracis Ames and comparison to closely related bacteria.</title>
        <authorList>
            <person name="Read T.D."/>
            <person name="Peterson S.N."/>
            <person name="Tourasse N.J."/>
            <person name="Baillie L.W."/>
            <person name="Paulsen I.T."/>
            <person name="Nelson K.E."/>
            <person name="Tettelin H."/>
            <person name="Fouts D.E."/>
            <person name="Eisen J.A."/>
            <person name="Gill S.R."/>
            <person name="Holtzapple E.K."/>
            <person name="Okstad O.A."/>
            <person name="Helgason E."/>
            <person name="Rilstone J."/>
            <person name="Wu M."/>
            <person name="Kolonay J.F."/>
            <person name="Beanan M.J."/>
            <person name="Dodson R.J."/>
            <person name="Brinkac L.M."/>
            <person name="Gwinn M.L."/>
            <person name="DeBoy R.T."/>
            <person name="Madpu R."/>
            <person name="Daugherty S.C."/>
            <person name="Durkin A.S."/>
            <person name="Haft D.H."/>
            <person name="Nelson W.C."/>
            <person name="Peterson J.D."/>
            <person name="Pop M."/>
            <person name="Khouri H.M."/>
            <person name="Radune D."/>
            <person name="Benton J.L."/>
            <person name="Mahamoud Y."/>
            <person name="Jiang L."/>
            <person name="Hance I.R."/>
            <person name="Weidman J.F."/>
            <person name="Berry K.J."/>
            <person name="Plaut R.D."/>
            <person name="Wolf A.M."/>
            <person name="Watkins K.L."/>
            <person name="Nierman W.C."/>
            <person name="Hazen A."/>
            <person name="Cline R.T."/>
            <person name="Redmond C."/>
            <person name="Thwaite J.E."/>
            <person name="White O."/>
            <person name="Salzberg S.L."/>
            <person name="Thomason B."/>
            <person name="Friedlander A.M."/>
            <person name="Koehler T.M."/>
            <person name="Hanna P.C."/>
            <person name="Kolstoe A.-B."/>
            <person name="Fraser C.M."/>
        </authorList>
    </citation>
    <scope>NUCLEOTIDE SEQUENCE [LARGE SCALE GENOMIC DNA]</scope>
    <source>
        <strain>Ames / isolate Porton</strain>
    </source>
</reference>
<reference key="2">
    <citation type="journal article" date="2009" name="J. Bacteriol.">
        <title>The complete genome sequence of Bacillus anthracis Ames 'Ancestor'.</title>
        <authorList>
            <person name="Ravel J."/>
            <person name="Jiang L."/>
            <person name="Stanley S.T."/>
            <person name="Wilson M.R."/>
            <person name="Decker R.S."/>
            <person name="Read T.D."/>
            <person name="Worsham P."/>
            <person name="Keim P.S."/>
            <person name="Salzberg S.L."/>
            <person name="Fraser-Liggett C.M."/>
            <person name="Rasko D.A."/>
        </authorList>
    </citation>
    <scope>NUCLEOTIDE SEQUENCE [LARGE SCALE GENOMIC DNA]</scope>
    <source>
        <strain>Ames ancestor</strain>
    </source>
</reference>
<reference key="3">
    <citation type="submission" date="2004-01" db="EMBL/GenBank/DDBJ databases">
        <title>Complete genome sequence of Bacillus anthracis Sterne.</title>
        <authorList>
            <person name="Brettin T.S."/>
            <person name="Bruce D."/>
            <person name="Challacombe J.F."/>
            <person name="Gilna P."/>
            <person name="Han C."/>
            <person name="Hill K."/>
            <person name="Hitchcock P."/>
            <person name="Jackson P."/>
            <person name="Keim P."/>
            <person name="Longmire J."/>
            <person name="Lucas S."/>
            <person name="Okinaka R."/>
            <person name="Richardson P."/>
            <person name="Rubin E."/>
            <person name="Tice H."/>
        </authorList>
    </citation>
    <scope>NUCLEOTIDE SEQUENCE [LARGE SCALE GENOMIC DNA]</scope>
    <source>
        <strain>Sterne</strain>
    </source>
</reference>
<organism>
    <name type="scientific">Bacillus anthracis</name>
    <dbReference type="NCBI Taxonomy" id="1392"/>
    <lineage>
        <taxon>Bacteria</taxon>
        <taxon>Bacillati</taxon>
        <taxon>Bacillota</taxon>
        <taxon>Bacilli</taxon>
        <taxon>Bacillales</taxon>
        <taxon>Bacillaceae</taxon>
        <taxon>Bacillus</taxon>
        <taxon>Bacillus cereus group</taxon>
    </lineage>
</organism>
<feature type="chain" id="PRO_0000122971" description="dTTP/UTP pyrophosphatase">
    <location>
        <begin position="1"/>
        <end position="191"/>
    </location>
</feature>
<feature type="active site" description="Proton acceptor" evidence="1">
    <location>
        <position position="69"/>
    </location>
</feature>
<feature type="site" description="Important for substrate specificity" evidence="1">
    <location>
        <position position="12"/>
    </location>
</feature>
<feature type="site" description="Important for substrate specificity" evidence="1">
    <location>
        <position position="70"/>
    </location>
</feature>
<feature type="site" description="Important for substrate specificity" evidence="1">
    <location>
        <position position="152"/>
    </location>
</feature>
<protein>
    <recommendedName>
        <fullName evidence="1">dTTP/UTP pyrophosphatase</fullName>
        <shortName evidence="1">dTTPase/UTPase</shortName>
        <ecNumber evidence="1">3.6.1.9</ecNumber>
    </recommendedName>
    <alternativeName>
        <fullName evidence="1">Nucleoside triphosphate pyrophosphatase</fullName>
    </alternativeName>
    <alternativeName>
        <fullName evidence="1">Nucleotide pyrophosphatase</fullName>
        <shortName evidence="1">Nucleotide PPase</shortName>
    </alternativeName>
</protein>
<dbReference type="EC" id="3.6.1.9" evidence="1"/>
<dbReference type="EMBL" id="AE016879">
    <property type="protein sequence ID" value="AAP28386.1"/>
    <property type="molecule type" value="Genomic_DNA"/>
</dbReference>
<dbReference type="EMBL" id="AE017334">
    <property type="protein sequence ID" value="AAT33810.1"/>
    <property type="molecule type" value="Genomic_DNA"/>
</dbReference>
<dbReference type="EMBL" id="AE017225">
    <property type="protein sequence ID" value="AAT56650.1"/>
    <property type="molecule type" value="Genomic_DNA"/>
</dbReference>
<dbReference type="RefSeq" id="NP_846900.1">
    <property type="nucleotide sequence ID" value="NC_003997.3"/>
</dbReference>
<dbReference type="RefSeq" id="WP_001226274.1">
    <property type="nucleotide sequence ID" value="NZ_WXXJ01000027.1"/>
</dbReference>
<dbReference type="RefSeq" id="YP_030599.1">
    <property type="nucleotide sequence ID" value="NC_005945.1"/>
</dbReference>
<dbReference type="SMR" id="Q81LD6"/>
<dbReference type="STRING" id="261594.GBAA_4686"/>
<dbReference type="DNASU" id="1083730"/>
<dbReference type="GeneID" id="45024327"/>
<dbReference type="KEGG" id="ban:BA_4686"/>
<dbReference type="KEGG" id="bar:GBAA_4686"/>
<dbReference type="KEGG" id="bat:BAS4352"/>
<dbReference type="PATRIC" id="fig|198094.11.peg.4652"/>
<dbReference type="eggNOG" id="COG0424">
    <property type="taxonomic scope" value="Bacteria"/>
</dbReference>
<dbReference type="HOGENOM" id="CLU_040416_0_0_9"/>
<dbReference type="OMA" id="VIGCDSV"/>
<dbReference type="OrthoDB" id="9807767at2"/>
<dbReference type="Proteomes" id="UP000000427">
    <property type="component" value="Chromosome"/>
</dbReference>
<dbReference type="Proteomes" id="UP000000594">
    <property type="component" value="Chromosome"/>
</dbReference>
<dbReference type="GO" id="GO:0005737">
    <property type="term" value="C:cytoplasm"/>
    <property type="evidence" value="ECO:0007669"/>
    <property type="project" value="UniProtKB-SubCell"/>
</dbReference>
<dbReference type="GO" id="GO:0036218">
    <property type="term" value="F:dTTP diphosphatase activity"/>
    <property type="evidence" value="ECO:0007669"/>
    <property type="project" value="RHEA"/>
</dbReference>
<dbReference type="GO" id="GO:0036221">
    <property type="term" value="F:UTP diphosphatase activity"/>
    <property type="evidence" value="ECO:0007669"/>
    <property type="project" value="RHEA"/>
</dbReference>
<dbReference type="GO" id="GO:0009117">
    <property type="term" value="P:nucleotide metabolic process"/>
    <property type="evidence" value="ECO:0007669"/>
    <property type="project" value="UniProtKB-KW"/>
</dbReference>
<dbReference type="CDD" id="cd00555">
    <property type="entry name" value="Maf"/>
    <property type="match status" value="1"/>
</dbReference>
<dbReference type="FunFam" id="3.90.950.10:FF:000007">
    <property type="entry name" value="dTTP/UTP pyrophosphatase"/>
    <property type="match status" value="1"/>
</dbReference>
<dbReference type="Gene3D" id="3.90.950.10">
    <property type="match status" value="1"/>
</dbReference>
<dbReference type="HAMAP" id="MF_00528">
    <property type="entry name" value="Maf"/>
    <property type="match status" value="1"/>
</dbReference>
<dbReference type="InterPro" id="IPR029001">
    <property type="entry name" value="ITPase-like_fam"/>
</dbReference>
<dbReference type="InterPro" id="IPR003697">
    <property type="entry name" value="Maf-like"/>
</dbReference>
<dbReference type="NCBIfam" id="TIGR00172">
    <property type="entry name" value="maf"/>
    <property type="match status" value="1"/>
</dbReference>
<dbReference type="PANTHER" id="PTHR43213">
    <property type="entry name" value="BIFUNCTIONAL DTTP/UTP PYROPHOSPHATASE/METHYLTRANSFERASE PROTEIN-RELATED"/>
    <property type="match status" value="1"/>
</dbReference>
<dbReference type="PANTHER" id="PTHR43213:SF5">
    <property type="entry name" value="BIFUNCTIONAL DTTP_UTP PYROPHOSPHATASE_METHYLTRANSFERASE PROTEIN-RELATED"/>
    <property type="match status" value="1"/>
</dbReference>
<dbReference type="Pfam" id="PF02545">
    <property type="entry name" value="Maf"/>
    <property type="match status" value="1"/>
</dbReference>
<dbReference type="PIRSF" id="PIRSF006305">
    <property type="entry name" value="Maf"/>
    <property type="match status" value="1"/>
</dbReference>
<dbReference type="SUPFAM" id="SSF52972">
    <property type="entry name" value="ITPase-like"/>
    <property type="match status" value="1"/>
</dbReference>
<name>NTPPA_BACAN</name>
<proteinExistence type="inferred from homology"/>